<name>DXR_AGRFC</name>
<reference key="1">
    <citation type="journal article" date="2001" name="Science">
        <title>The genome of the natural genetic engineer Agrobacterium tumefaciens C58.</title>
        <authorList>
            <person name="Wood D.W."/>
            <person name="Setubal J.C."/>
            <person name="Kaul R."/>
            <person name="Monks D.E."/>
            <person name="Kitajima J.P."/>
            <person name="Okura V.K."/>
            <person name="Zhou Y."/>
            <person name="Chen L."/>
            <person name="Wood G.E."/>
            <person name="Almeida N.F. Jr."/>
            <person name="Woo L."/>
            <person name="Chen Y."/>
            <person name="Paulsen I.T."/>
            <person name="Eisen J.A."/>
            <person name="Karp P.D."/>
            <person name="Bovee D. Sr."/>
            <person name="Chapman P."/>
            <person name="Clendenning J."/>
            <person name="Deatherage G."/>
            <person name="Gillet W."/>
            <person name="Grant C."/>
            <person name="Kutyavin T."/>
            <person name="Levy R."/>
            <person name="Li M.-J."/>
            <person name="McClelland E."/>
            <person name="Palmieri A."/>
            <person name="Raymond C."/>
            <person name="Rouse G."/>
            <person name="Saenphimmachak C."/>
            <person name="Wu Z."/>
            <person name="Romero P."/>
            <person name="Gordon D."/>
            <person name="Zhang S."/>
            <person name="Yoo H."/>
            <person name="Tao Y."/>
            <person name="Biddle P."/>
            <person name="Jung M."/>
            <person name="Krespan W."/>
            <person name="Perry M."/>
            <person name="Gordon-Kamm B."/>
            <person name="Liao L."/>
            <person name="Kim S."/>
            <person name="Hendrick C."/>
            <person name="Zhao Z.-Y."/>
            <person name="Dolan M."/>
            <person name="Chumley F."/>
            <person name="Tingey S.V."/>
            <person name="Tomb J.-F."/>
            <person name="Gordon M.P."/>
            <person name="Olson M.V."/>
            <person name="Nester E.W."/>
        </authorList>
    </citation>
    <scope>NUCLEOTIDE SEQUENCE [LARGE SCALE GENOMIC DNA]</scope>
    <source>
        <strain>C58 / ATCC 33970</strain>
    </source>
</reference>
<reference key="2">
    <citation type="journal article" date="2001" name="Science">
        <title>Genome sequence of the plant pathogen and biotechnology agent Agrobacterium tumefaciens C58.</title>
        <authorList>
            <person name="Goodner B."/>
            <person name="Hinkle G."/>
            <person name="Gattung S."/>
            <person name="Miller N."/>
            <person name="Blanchard M."/>
            <person name="Qurollo B."/>
            <person name="Goldman B.S."/>
            <person name="Cao Y."/>
            <person name="Askenazi M."/>
            <person name="Halling C."/>
            <person name="Mullin L."/>
            <person name="Houmiel K."/>
            <person name="Gordon J."/>
            <person name="Vaudin M."/>
            <person name="Iartchouk O."/>
            <person name="Epp A."/>
            <person name="Liu F."/>
            <person name="Wollam C."/>
            <person name="Allinger M."/>
            <person name="Doughty D."/>
            <person name="Scott C."/>
            <person name="Lappas C."/>
            <person name="Markelz B."/>
            <person name="Flanagan C."/>
            <person name="Crowell C."/>
            <person name="Gurson J."/>
            <person name="Lomo C."/>
            <person name="Sear C."/>
            <person name="Strub G."/>
            <person name="Cielo C."/>
            <person name="Slater S."/>
        </authorList>
    </citation>
    <scope>NUCLEOTIDE SEQUENCE [LARGE SCALE GENOMIC DNA]</scope>
    <source>
        <strain>C58 / ATCC 33970</strain>
    </source>
</reference>
<keyword id="KW-0414">Isoprene biosynthesis</keyword>
<keyword id="KW-0464">Manganese</keyword>
<keyword id="KW-0479">Metal-binding</keyword>
<keyword id="KW-0521">NADP</keyword>
<keyword id="KW-0560">Oxidoreductase</keyword>
<keyword id="KW-1185">Reference proteome</keyword>
<accession>Q8UC86</accession>
<comment type="function">
    <text evidence="1">Catalyzes the NADPH-dependent rearrangement and reduction of 1-deoxy-D-xylulose-5-phosphate (DXP) to 2-C-methyl-D-erythritol 4-phosphate (MEP).</text>
</comment>
<comment type="catalytic activity">
    <reaction evidence="1">
        <text>2-C-methyl-D-erythritol 4-phosphate + NADP(+) = 1-deoxy-D-xylulose 5-phosphate + NADPH + H(+)</text>
        <dbReference type="Rhea" id="RHEA:13717"/>
        <dbReference type="ChEBI" id="CHEBI:15378"/>
        <dbReference type="ChEBI" id="CHEBI:57783"/>
        <dbReference type="ChEBI" id="CHEBI:57792"/>
        <dbReference type="ChEBI" id="CHEBI:58262"/>
        <dbReference type="ChEBI" id="CHEBI:58349"/>
        <dbReference type="EC" id="1.1.1.267"/>
    </reaction>
    <physiologicalReaction direction="right-to-left" evidence="1">
        <dbReference type="Rhea" id="RHEA:13719"/>
    </physiologicalReaction>
</comment>
<comment type="cofactor">
    <cofactor evidence="1">
        <name>Mg(2+)</name>
        <dbReference type="ChEBI" id="CHEBI:18420"/>
    </cofactor>
    <cofactor evidence="1">
        <name>Mn(2+)</name>
        <dbReference type="ChEBI" id="CHEBI:29035"/>
    </cofactor>
</comment>
<comment type="pathway">
    <text evidence="1">Isoprenoid biosynthesis; isopentenyl diphosphate biosynthesis via DXP pathway; isopentenyl diphosphate from 1-deoxy-D-xylulose 5-phosphate: step 1/6.</text>
</comment>
<comment type="similarity">
    <text evidence="1">Belongs to the DXR family.</text>
</comment>
<sequence>MTNASEMPRKLTILGSTGSIGTNTLDVVRQLGGRDGFEIMALTGAGNIALLAEQAREFGAQLAVTADDDKYEALKSALAGTGIKVAAGMAGLEEAASMDAGWVMAAIAGTPGLAPTLTAARRGADIALANKECLVSAGDVFLRTVKQGGGRLIPVDSEHSAIFQCLTGEYKQAVERIVLTASGGPFRTWSRDEMSNVTADIARAHPNWSMGLKVSIGSASMFNKGLEMIEAKYLFDLRPDQVDVIVHPQSIIHSMVGYTDGSYIAQLGSPDMRTAISYALTYPERGNLSVERLDFAKLARLDFEAPDEARFPALRLARMALERGGLQGAALNAAEETAFHAFVAGGIGFLDMAEIVETVMDRMHDGRTAETMDDVFSADEEARRHALELIATKEKAA</sequence>
<proteinExistence type="inferred from homology"/>
<organism>
    <name type="scientific">Agrobacterium fabrum (strain C58 / ATCC 33970)</name>
    <name type="common">Agrobacterium tumefaciens (strain C58)</name>
    <dbReference type="NCBI Taxonomy" id="176299"/>
    <lineage>
        <taxon>Bacteria</taxon>
        <taxon>Pseudomonadati</taxon>
        <taxon>Pseudomonadota</taxon>
        <taxon>Alphaproteobacteria</taxon>
        <taxon>Hyphomicrobiales</taxon>
        <taxon>Rhizobiaceae</taxon>
        <taxon>Rhizobium/Agrobacterium group</taxon>
        <taxon>Agrobacterium</taxon>
        <taxon>Agrobacterium tumefaciens complex</taxon>
    </lineage>
</organism>
<gene>
    <name evidence="1" type="primary">dxr</name>
    <name type="ordered locus">Atu2612</name>
    <name type="ORF">AGR_C_4736</name>
</gene>
<protein>
    <recommendedName>
        <fullName evidence="1">1-deoxy-D-xylulose 5-phosphate reductoisomerase</fullName>
        <shortName evidence="1">DXP reductoisomerase</shortName>
        <ecNumber evidence="1">1.1.1.267</ecNumber>
    </recommendedName>
    <alternativeName>
        <fullName evidence="1">1-deoxyxylulose-5-phosphate reductoisomerase</fullName>
    </alternativeName>
    <alternativeName>
        <fullName evidence="1">2-C-methyl-D-erythritol 4-phosphate synthase</fullName>
    </alternativeName>
</protein>
<evidence type="ECO:0000255" key="1">
    <source>
        <dbReference type="HAMAP-Rule" id="MF_00183"/>
    </source>
</evidence>
<feature type="chain" id="PRO_0000163595" description="1-deoxy-D-xylulose 5-phosphate reductoisomerase">
    <location>
        <begin position="1"/>
        <end position="397"/>
    </location>
</feature>
<feature type="binding site" evidence="1">
    <location>
        <position position="17"/>
    </location>
    <ligand>
        <name>NADPH</name>
        <dbReference type="ChEBI" id="CHEBI:57783"/>
    </ligand>
</feature>
<feature type="binding site" evidence="1">
    <location>
        <position position="18"/>
    </location>
    <ligand>
        <name>NADPH</name>
        <dbReference type="ChEBI" id="CHEBI:57783"/>
    </ligand>
</feature>
<feature type="binding site" evidence="1">
    <location>
        <position position="19"/>
    </location>
    <ligand>
        <name>NADPH</name>
        <dbReference type="ChEBI" id="CHEBI:57783"/>
    </ligand>
</feature>
<feature type="binding site" evidence="1">
    <location>
        <position position="20"/>
    </location>
    <ligand>
        <name>NADPH</name>
        <dbReference type="ChEBI" id="CHEBI:57783"/>
    </ligand>
</feature>
<feature type="binding site" evidence="1">
    <location>
        <position position="45"/>
    </location>
    <ligand>
        <name>NADPH</name>
        <dbReference type="ChEBI" id="CHEBI:57783"/>
    </ligand>
</feature>
<feature type="binding site" evidence="1">
    <location>
        <position position="47"/>
    </location>
    <ligand>
        <name>NADPH</name>
        <dbReference type="ChEBI" id="CHEBI:57783"/>
    </ligand>
</feature>
<feature type="binding site" evidence="1">
    <location>
        <position position="130"/>
    </location>
    <ligand>
        <name>NADPH</name>
        <dbReference type="ChEBI" id="CHEBI:57783"/>
    </ligand>
</feature>
<feature type="binding site" evidence="1">
    <location>
        <position position="131"/>
    </location>
    <ligand>
        <name>1-deoxy-D-xylulose 5-phosphate</name>
        <dbReference type="ChEBI" id="CHEBI:57792"/>
    </ligand>
</feature>
<feature type="binding site" evidence="1">
    <location>
        <position position="132"/>
    </location>
    <ligand>
        <name>NADPH</name>
        <dbReference type="ChEBI" id="CHEBI:57783"/>
    </ligand>
</feature>
<feature type="binding site" evidence="1">
    <location>
        <position position="156"/>
    </location>
    <ligand>
        <name>Mn(2+)</name>
        <dbReference type="ChEBI" id="CHEBI:29035"/>
    </ligand>
</feature>
<feature type="binding site" evidence="1">
    <location>
        <position position="157"/>
    </location>
    <ligand>
        <name>1-deoxy-D-xylulose 5-phosphate</name>
        <dbReference type="ChEBI" id="CHEBI:57792"/>
    </ligand>
</feature>
<feature type="binding site" evidence="1">
    <location>
        <position position="158"/>
    </location>
    <ligand>
        <name>1-deoxy-D-xylulose 5-phosphate</name>
        <dbReference type="ChEBI" id="CHEBI:57792"/>
    </ligand>
</feature>
<feature type="binding site" evidence="1">
    <location>
        <position position="158"/>
    </location>
    <ligand>
        <name>Mn(2+)</name>
        <dbReference type="ChEBI" id="CHEBI:29035"/>
    </ligand>
</feature>
<feature type="binding site" evidence="1">
    <location>
        <position position="182"/>
    </location>
    <ligand>
        <name>1-deoxy-D-xylulose 5-phosphate</name>
        <dbReference type="ChEBI" id="CHEBI:57792"/>
    </ligand>
</feature>
<feature type="binding site" evidence="1">
    <location>
        <position position="205"/>
    </location>
    <ligand>
        <name>1-deoxy-D-xylulose 5-phosphate</name>
        <dbReference type="ChEBI" id="CHEBI:57792"/>
    </ligand>
</feature>
<feature type="binding site" evidence="1">
    <location>
        <position position="211"/>
    </location>
    <ligand>
        <name>NADPH</name>
        <dbReference type="ChEBI" id="CHEBI:57783"/>
    </ligand>
</feature>
<feature type="binding site" evidence="1">
    <location>
        <position position="218"/>
    </location>
    <ligand>
        <name>1-deoxy-D-xylulose 5-phosphate</name>
        <dbReference type="ChEBI" id="CHEBI:57792"/>
    </ligand>
</feature>
<feature type="binding site" evidence="1">
    <location>
        <position position="223"/>
    </location>
    <ligand>
        <name>1-deoxy-D-xylulose 5-phosphate</name>
        <dbReference type="ChEBI" id="CHEBI:57792"/>
    </ligand>
</feature>
<feature type="binding site" evidence="1">
    <location>
        <position position="224"/>
    </location>
    <ligand>
        <name>1-deoxy-D-xylulose 5-phosphate</name>
        <dbReference type="ChEBI" id="CHEBI:57792"/>
    </ligand>
</feature>
<feature type="binding site" evidence="1">
    <location>
        <position position="227"/>
    </location>
    <ligand>
        <name>1-deoxy-D-xylulose 5-phosphate</name>
        <dbReference type="ChEBI" id="CHEBI:57792"/>
    </ligand>
</feature>
<feature type="binding site" evidence="1">
    <location>
        <position position="227"/>
    </location>
    <ligand>
        <name>Mn(2+)</name>
        <dbReference type="ChEBI" id="CHEBI:29035"/>
    </ligand>
</feature>
<dbReference type="EC" id="1.1.1.267" evidence="1"/>
<dbReference type="EMBL" id="AE007869">
    <property type="protein sequence ID" value="AAK88334.1"/>
    <property type="molecule type" value="Genomic_DNA"/>
</dbReference>
<dbReference type="PIR" id="AC2897">
    <property type="entry name" value="AC2897"/>
</dbReference>
<dbReference type="PIR" id="E97672">
    <property type="entry name" value="E97672"/>
</dbReference>
<dbReference type="RefSeq" id="NP_355549.1">
    <property type="nucleotide sequence ID" value="NC_003062.2"/>
</dbReference>
<dbReference type="RefSeq" id="WP_010972436.1">
    <property type="nucleotide sequence ID" value="NC_003062.2"/>
</dbReference>
<dbReference type="SMR" id="Q8UC86"/>
<dbReference type="STRING" id="176299.Atu2612"/>
<dbReference type="EnsemblBacteria" id="AAK88334">
    <property type="protein sequence ID" value="AAK88334"/>
    <property type="gene ID" value="Atu2612"/>
</dbReference>
<dbReference type="GeneID" id="1134650"/>
<dbReference type="KEGG" id="atu:Atu2612"/>
<dbReference type="PATRIC" id="fig|176299.10.peg.2616"/>
<dbReference type="eggNOG" id="COG0743">
    <property type="taxonomic scope" value="Bacteria"/>
</dbReference>
<dbReference type="HOGENOM" id="CLU_035714_4_0_5"/>
<dbReference type="OrthoDB" id="9806546at2"/>
<dbReference type="PhylomeDB" id="Q8UC86"/>
<dbReference type="BioCyc" id="AGRO:ATU2612-MONOMER"/>
<dbReference type="UniPathway" id="UPA00056">
    <property type="reaction ID" value="UER00092"/>
</dbReference>
<dbReference type="Proteomes" id="UP000000813">
    <property type="component" value="Chromosome circular"/>
</dbReference>
<dbReference type="GO" id="GO:0030604">
    <property type="term" value="F:1-deoxy-D-xylulose-5-phosphate reductoisomerase activity"/>
    <property type="evidence" value="ECO:0007669"/>
    <property type="project" value="UniProtKB-UniRule"/>
</dbReference>
<dbReference type="GO" id="GO:0030145">
    <property type="term" value="F:manganese ion binding"/>
    <property type="evidence" value="ECO:0007669"/>
    <property type="project" value="TreeGrafter"/>
</dbReference>
<dbReference type="GO" id="GO:0070402">
    <property type="term" value="F:NADPH binding"/>
    <property type="evidence" value="ECO:0007669"/>
    <property type="project" value="InterPro"/>
</dbReference>
<dbReference type="GO" id="GO:0051484">
    <property type="term" value="P:isopentenyl diphosphate biosynthetic process, methylerythritol 4-phosphate pathway involved in terpenoid biosynthetic process"/>
    <property type="evidence" value="ECO:0007669"/>
    <property type="project" value="TreeGrafter"/>
</dbReference>
<dbReference type="FunFam" id="3.40.50.720:FF:000045">
    <property type="entry name" value="1-deoxy-D-xylulose 5-phosphate reductoisomerase"/>
    <property type="match status" value="1"/>
</dbReference>
<dbReference type="Gene3D" id="1.10.1740.10">
    <property type="match status" value="1"/>
</dbReference>
<dbReference type="Gene3D" id="3.40.50.720">
    <property type="entry name" value="NAD(P)-binding Rossmann-like Domain"/>
    <property type="match status" value="1"/>
</dbReference>
<dbReference type="HAMAP" id="MF_00183">
    <property type="entry name" value="DXP_reductoisom"/>
    <property type="match status" value="1"/>
</dbReference>
<dbReference type="InterPro" id="IPR003821">
    <property type="entry name" value="DXP_reductoisomerase"/>
</dbReference>
<dbReference type="InterPro" id="IPR013644">
    <property type="entry name" value="DXP_reductoisomerase_C"/>
</dbReference>
<dbReference type="InterPro" id="IPR013512">
    <property type="entry name" value="DXP_reductoisomerase_N"/>
</dbReference>
<dbReference type="InterPro" id="IPR026877">
    <property type="entry name" value="DXPR_C"/>
</dbReference>
<dbReference type="InterPro" id="IPR036169">
    <property type="entry name" value="DXPR_C_sf"/>
</dbReference>
<dbReference type="InterPro" id="IPR036291">
    <property type="entry name" value="NAD(P)-bd_dom_sf"/>
</dbReference>
<dbReference type="NCBIfam" id="TIGR00243">
    <property type="entry name" value="Dxr"/>
    <property type="match status" value="1"/>
</dbReference>
<dbReference type="PANTHER" id="PTHR30525">
    <property type="entry name" value="1-DEOXY-D-XYLULOSE 5-PHOSPHATE REDUCTOISOMERASE"/>
    <property type="match status" value="1"/>
</dbReference>
<dbReference type="PANTHER" id="PTHR30525:SF0">
    <property type="entry name" value="1-DEOXY-D-XYLULOSE 5-PHOSPHATE REDUCTOISOMERASE, CHLOROPLASTIC"/>
    <property type="match status" value="1"/>
</dbReference>
<dbReference type="Pfam" id="PF08436">
    <property type="entry name" value="DXP_redisom_C"/>
    <property type="match status" value="1"/>
</dbReference>
<dbReference type="Pfam" id="PF02670">
    <property type="entry name" value="DXP_reductoisom"/>
    <property type="match status" value="1"/>
</dbReference>
<dbReference type="Pfam" id="PF13288">
    <property type="entry name" value="DXPR_C"/>
    <property type="match status" value="1"/>
</dbReference>
<dbReference type="PIRSF" id="PIRSF006205">
    <property type="entry name" value="Dxp_reductismrs"/>
    <property type="match status" value="1"/>
</dbReference>
<dbReference type="SUPFAM" id="SSF69055">
    <property type="entry name" value="1-deoxy-D-xylulose-5-phosphate reductoisomerase, C-terminal domain"/>
    <property type="match status" value="1"/>
</dbReference>
<dbReference type="SUPFAM" id="SSF55347">
    <property type="entry name" value="Glyceraldehyde-3-phosphate dehydrogenase-like, C-terminal domain"/>
    <property type="match status" value="1"/>
</dbReference>
<dbReference type="SUPFAM" id="SSF51735">
    <property type="entry name" value="NAD(P)-binding Rossmann-fold domains"/>
    <property type="match status" value="1"/>
</dbReference>